<keyword id="KW-0152">Cholesterol biosynthesis</keyword>
<keyword id="KW-0153">Cholesterol metabolism</keyword>
<keyword id="KW-0256">Endoplasmic reticulum</keyword>
<keyword id="KW-0325">Glycoprotein</keyword>
<keyword id="KW-0444">Lipid biosynthesis</keyword>
<keyword id="KW-0443">Lipid metabolism</keyword>
<keyword id="KW-0472">Membrane</keyword>
<keyword id="KW-0521">NADP</keyword>
<keyword id="KW-0560">Oxidoreductase</keyword>
<keyword id="KW-0597">Phosphoprotein</keyword>
<keyword id="KW-1185">Reference proteome</keyword>
<keyword id="KW-0752">Steroid biosynthesis</keyword>
<keyword id="KW-0753">Steroid metabolism</keyword>
<keyword id="KW-0756">Sterol biosynthesis</keyword>
<keyword id="KW-1207">Sterol metabolism</keyword>
<keyword id="KW-0812">Transmembrane</keyword>
<keyword id="KW-1133">Transmembrane helix</keyword>
<gene>
    <name type="primary">HMGCR</name>
</gene>
<proteinExistence type="evidence at transcript level"/>
<organism>
    <name type="scientific">Strongylocentrotus purpuratus</name>
    <name type="common">Purple sea urchin</name>
    <dbReference type="NCBI Taxonomy" id="7668"/>
    <lineage>
        <taxon>Eukaryota</taxon>
        <taxon>Metazoa</taxon>
        <taxon>Echinodermata</taxon>
        <taxon>Eleutherozoa</taxon>
        <taxon>Echinozoa</taxon>
        <taxon>Echinoidea</taxon>
        <taxon>Euechinoidea</taxon>
        <taxon>Echinacea</taxon>
        <taxon>Camarodonta</taxon>
        <taxon>Echinidea</taxon>
        <taxon>Strongylocentrotidae</taxon>
        <taxon>Strongylocentrotus</taxon>
    </lineage>
</organism>
<comment type="function">
    <text>This transmembrane glycoprotein is involved in the control of cholesterol biosynthesis. It is the rate-limiting enzyme of sterol biosynthesis.</text>
</comment>
<comment type="catalytic activity">
    <reaction evidence="3">
        <text>(R)-mevalonate + 2 NADP(+) + CoA = (3S)-3-hydroxy-3-methylglutaryl-CoA + 2 NADPH + 2 H(+)</text>
        <dbReference type="Rhea" id="RHEA:15989"/>
        <dbReference type="ChEBI" id="CHEBI:15378"/>
        <dbReference type="ChEBI" id="CHEBI:36464"/>
        <dbReference type="ChEBI" id="CHEBI:43074"/>
        <dbReference type="ChEBI" id="CHEBI:57287"/>
        <dbReference type="ChEBI" id="CHEBI:57783"/>
        <dbReference type="ChEBI" id="CHEBI:58349"/>
        <dbReference type="EC" id="1.1.1.34"/>
    </reaction>
</comment>
<comment type="pathway">
    <text>Metabolic intermediate biosynthesis; (R)-mevalonate biosynthesis; (R)-mevalonate from acetyl-CoA: step 3/3.</text>
</comment>
<comment type="subcellular location">
    <subcellularLocation>
        <location>Endoplasmic reticulum membrane</location>
        <topology>Multi-pass membrane protein</topology>
    </subcellularLocation>
</comment>
<comment type="similarity">
    <text evidence="5">Belongs to the HMG-CoA reductase family.</text>
</comment>
<name>HMDH_STRPU</name>
<protein>
    <recommendedName>
        <fullName>3-hydroxy-3-methylglutaryl-coenzyme A reductase</fullName>
        <shortName>HMG-CoA reductase</shortName>
        <ecNumber>1.1.1.34</ecNumber>
    </recommendedName>
</protein>
<evidence type="ECO:0000250" key="1"/>
<evidence type="ECO:0000255" key="2"/>
<evidence type="ECO:0000255" key="3">
    <source>
        <dbReference type="PROSITE-ProRule" id="PRU10003"/>
    </source>
</evidence>
<evidence type="ECO:0000256" key="4">
    <source>
        <dbReference type="SAM" id="MobiDB-lite"/>
    </source>
</evidence>
<evidence type="ECO:0000305" key="5"/>
<feature type="chain" id="PRO_0000114425" description="3-hydroxy-3-methylglutaryl-coenzyme A reductase">
    <location>
        <begin position="1"/>
        <end position="932"/>
    </location>
</feature>
<feature type="transmembrane region" description="Helical" evidence="2">
    <location>
        <begin position="20"/>
        <end position="40"/>
    </location>
</feature>
<feature type="transmembrane region" description="Helical" evidence="2">
    <location>
        <begin position="59"/>
        <end position="79"/>
    </location>
</feature>
<feature type="transmembrane region" description="Helical" evidence="2">
    <location>
        <begin position="92"/>
        <end position="112"/>
    </location>
</feature>
<feature type="transmembrane region" description="Helical" evidence="2">
    <location>
        <begin position="113"/>
        <end position="133"/>
    </location>
</feature>
<feature type="transmembrane region" description="Helical" evidence="2">
    <location>
        <begin position="162"/>
        <end position="182"/>
    </location>
</feature>
<feature type="transmembrane region" description="Helical" evidence="2">
    <location>
        <begin position="193"/>
        <end position="213"/>
    </location>
</feature>
<feature type="transmembrane region" description="Helical" evidence="2">
    <location>
        <begin position="322"/>
        <end position="342"/>
    </location>
</feature>
<feature type="region of interest" description="Linker">
    <location>
        <begin position="343"/>
        <end position="467"/>
    </location>
</feature>
<feature type="region of interest" description="Disordered" evidence="4">
    <location>
        <begin position="357"/>
        <end position="442"/>
    </location>
</feature>
<feature type="region of interest" description="Catalytic">
    <location>
        <begin position="468"/>
        <end position="932"/>
    </location>
</feature>
<feature type="compositionally biased region" description="Basic and acidic residues" evidence="4">
    <location>
        <begin position="357"/>
        <end position="367"/>
    </location>
</feature>
<feature type="compositionally biased region" description="Polar residues" evidence="4">
    <location>
        <begin position="374"/>
        <end position="403"/>
    </location>
</feature>
<feature type="compositionally biased region" description="Low complexity" evidence="4">
    <location>
        <begin position="406"/>
        <end position="421"/>
    </location>
</feature>
<feature type="active site" description="Charge relay system" evidence="1">
    <location>
        <position position="575"/>
    </location>
</feature>
<feature type="active site" description="Charge relay system" evidence="1">
    <location>
        <position position="707"/>
    </location>
</feature>
<feature type="active site" description="Charge relay system" evidence="1">
    <location>
        <position position="783"/>
    </location>
</feature>
<feature type="active site" description="Proton donor" evidence="3">
    <location>
        <position position="882"/>
    </location>
</feature>
<feature type="modified residue" description="Phosphoserine; by AMPK" evidence="1">
    <location>
        <position position="888"/>
    </location>
</feature>
<feature type="glycosylation site" description="N-linked (GlcNAc...) asparagine" evidence="2">
    <location>
        <position position="279"/>
    </location>
</feature>
<feature type="glycosylation site" description="N-linked (GlcNAc...) asparagine" evidence="2">
    <location>
        <position position="850"/>
    </location>
</feature>
<feature type="glycosylation site" description="N-linked (GlcNAc...) asparagine" evidence="2">
    <location>
        <position position="886"/>
    </location>
</feature>
<sequence length="932" mass="100966">MLSRLFLAQGRFCSSHPWEVIVCTLTLTICMLSMNYFTGLPRICGWNYECAPQVKESSLSSDVLVMCIMRTLAVAYLYLQFTKLRTTGSKYILGIAGLFTIFSSFLFSSAVIHLFGLELTGLNEALPFFLLLIDLTKASALTKFALSSTTQNEVVDNIARGMAILGPTITLDTVVTTLVISIGTMSSIRKMEVFCCFGILSLIANYFVFMTFFPACLSLVLELSNSNKYGRPVWHLGRFAEVLEEEEDRKPNPVVQRVKMIMRTGLVLVHAHSYWLASNDTELMSRDMLYDGNLLTDKKIDPTMPLWEFYATRLWPPTLDYILTAILATVLASHYIFFSDLATYPEKRVSIMEGHEVVNPGSDHEDASEVETIGTLSSSPSTSDVRVIESMTSRTQACQTDPVTASPRNSRSSSPVSSHSVKPARFTIGSSGSGSEDEEEEVIKEEEVEWVLETELKAPRPMPELLEILNVGKGPNALTDDEVQLLVGAKHIPAYKLENILDNPERGVAVRRQIISKLLPITDALEKLPYASYDYSFVSGACCENVIGYMPVPVGVAGPLLLDGQEFQVPMATTEGCLVASTNRGCRALRSAGGIHSVLIGDGMTRGPLVRLPSAQEAGAIKQWLEVPENFAAIKERFESTSRFAKLKSIQTALAGRYMFLRFKALTGDAMGMNMISKGTEQALHALQTMFPNIEIMSLSGNYCTDKKVAAINWIEGRGKSVVCEATVPAHIVQQVLKTSASALVDLNIHKNLVGSAMAGSIGGFNAHAANIVTAIYIATGQDAAQNIASSNCMTLMETRGPKGGDLYLSCTMPSIELGTVGGGTVLPPQSACLQMMDVKGSNIHGSGLNASQLARIVCATVMAGELSLMSALAAGHLVKSHMKHNRSALNIASPLPSIDEVATHRRSKSVDFSALKESSAAAPGTCTANAS</sequence>
<dbReference type="EC" id="1.1.1.34"/>
<dbReference type="EMBL" id="J04200">
    <property type="protein sequence ID" value="AAA30060.1"/>
    <property type="molecule type" value="mRNA"/>
</dbReference>
<dbReference type="EMBL" id="J03523">
    <property type="status" value="NOT_ANNOTATED_CDS"/>
    <property type="molecule type" value="Genomic_DNA"/>
</dbReference>
<dbReference type="PIR" id="A31898">
    <property type="entry name" value="A31898"/>
</dbReference>
<dbReference type="RefSeq" id="NP_999724.1">
    <property type="nucleotide sequence ID" value="NM_214559.1"/>
</dbReference>
<dbReference type="SMR" id="P16393"/>
<dbReference type="STRING" id="7668.P16393"/>
<dbReference type="GlyCosmos" id="P16393">
    <property type="glycosylation" value="3 sites, No reported glycans"/>
</dbReference>
<dbReference type="EnsemblMetazoa" id="NM_214559">
    <property type="protein sequence ID" value="NP_999724"/>
    <property type="gene ID" value="GeneID_373355"/>
</dbReference>
<dbReference type="GeneID" id="373355"/>
<dbReference type="KEGG" id="spu:373355"/>
<dbReference type="CTD" id="3156"/>
<dbReference type="eggNOG" id="KOG2480">
    <property type="taxonomic scope" value="Eukaryota"/>
</dbReference>
<dbReference type="HOGENOM" id="CLU_346582_0_0_1"/>
<dbReference type="InParanoid" id="P16393"/>
<dbReference type="OMA" id="DCHIAMD"/>
<dbReference type="OrthoDB" id="310654at2759"/>
<dbReference type="PhylomeDB" id="P16393"/>
<dbReference type="UniPathway" id="UPA00058">
    <property type="reaction ID" value="UER00103"/>
</dbReference>
<dbReference type="Proteomes" id="UP000007110">
    <property type="component" value="Unassembled WGS sequence"/>
</dbReference>
<dbReference type="GO" id="GO:0005789">
    <property type="term" value="C:endoplasmic reticulum membrane"/>
    <property type="evidence" value="ECO:0000318"/>
    <property type="project" value="GO_Central"/>
</dbReference>
<dbReference type="GO" id="GO:0005778">
    <property type="term" value="C:peroxisomal membrane"/>
    <property type="evidence" value="ECO:0000318"/>
    <property type="project" value="GO_Central"/>
</dbReference>
<dbReference type="GO" id="GO:0004420">
    <property type="term" value="F:hydroxymethylglutaryl-CoA reductase (NADPH) activity"/>
    <property type="evidence" value="ECO:0000318"/>
    <property type="project" value="GO_Central"/>
</dbReference>
<dbReference type="GO" id="GO:0050661">
    <property type="term" value="F:NADP binding"/>
    <property type="evidence" value="ECO:0007669"/>
    <property type="project" value="InterPro"/>
</dbReference>
<dbReference type="GO" id="GO:0006695">
    <property type="term" value="P:cholesterol biosynthetic process"/>
    <property type="evidence" value="ECO:0007669"/>
    <property type="project" value="UniProtKB-KW"/>
</dbReference>
<dbReference type="GO" id="GO:0015936">
    <property type="term" value="P:coenzyme A metabolic process"/>
    <property type="evidence" value="ECO:0007669"/>
    <property type="project" value="InterPro"/>
</dbReference>
<dbReference type="GO" id="GO:0008299">
    <property type="term" value="P:isoprenoid biosynthetic process"/>
    <property type="evidence" value="ECO:0000318"/>
    <property type="project" value="GO_Central"/>
</dbReference>
<dbReference type="GO" id="GO:0016126">
    <property type="term" value="P:sterol biosynthetic process"/>
    <property type="evidence" value="ECO:0000318"/>
    <property type="project" value="GO_Central"/>
</dbReference>
<dbReference type="CDD" id="cd00643">
    <property type="entry name" value="HMG-CoA_reductase_classI"/>
    <property type="match status" value="1"/>
</dbReference>
<dbReference type="FunFam" id="1.10.3270.10:FF:000001">
    <property type="entry name" value="3-hydroxy-3-methylglutaryl coenzyme A reductase"/>
    <property type="match status" value="1"/>
</dbReference>
<dbReference type="FunFam" id="3.30.70.420:FF:000001">
    <property type="entry name" value="3-hydroxy-3-methylglutaryl coenzyme A reductase"/>
    <property type="match status" value="1"/>
</dbReference>
<dbReference type="FunFam" id="3.90.770.10:FF:000002">
    <property type="entry name" value="3-hydroxy-3-methylglutaryl coenzyme A reductase"/>
    <property type="match status" value="1"/>
</dbReference>
<dbReference type="Gene3D" id="3.90.770.10">
    <property type="entry name" value="3-hydroxy-3-methylglutaryl-coenzyme A Reductase, Chain A, domain 2"/>
    <property type="match status" value="1"/>
</dbReference>
<dbReference type="Gene3D" id="1.10.3270.10">
    <property type="entry name" value="HMGR, N-terminal domain"/>
    <property type="match status" value="1"/>
</dbReference>
<dbReference type="Gene3D" id="3.30.70.420">
    <property type="entry name" value="Hydroxymethylglutaryl-CoA reductase, class I/II, NAD/NADP-binding domain"/>
    <property type="match status" value="1"/>
</dbReference>
<dbReference type="InterPro" id="IPR002202">
    <property type="entry name" value="HMG_CoA_Rdtase"/>
</dbReference>
<dbReference type="InterPro" id="IPR023074">
    <property type="entry name" value="HMG_CoA_Rdtase_cat_sf"/>
</dbReference>
<dbReference type="InterPro" id="IPR023076">
    <property type="entry name" value="HMG_CoA_Rdtase_CS"/>
</dbReference>
<dbReference type="InterPro" id="IPR004554">
    <property type="entry name" value="HMG_CoA_Rdtase_eu_arc"/>
</dbReference>
<dbReference type="InterPro" id="IPR004816">
    <property type="entry name" value="HMG_CoA_Rdtase_metazoan"/>
</dbReference>
<dbReference type="InterPro" id="IPR023282">
    <property type="entry name" value="HMG_CoA_Rdtase_N"/>
</dbReference>
<dbReference type="InterPro" id="IPR009023">
    <property type="entry name" value="HMG_CoA_Rdtase_NAD(P)-bd_sf"/>
</dbReference>
<dbReference type="InterPro" id="IPR009029">
    <property type="entry name" value="HMG_CoA_Rdtase_sub-bd_dom_sf"/>
</dbReference>
<dbReference type="InterPro" id="IPR053958">
    <property type="entry name" value="HMGCR/SNAP/NPC1-like_SSD"/>
</dbReference>
<dbReference type="InterPro" id="IPR000731">
    <property type="entry name" value="SSD"/>
</dbReference>
<dbReference type="NCBIfam" id="TIGR00920">
    <property type="entry name" value="2A060605"/>
    <property type="match status" value="1"/>
</dbReference>
<dbReference type="NCBIfam" id="TIGR00533">
    <property type="entry name" value="HMG_CoA_R_NADP"/>
    <property type="match status" value="1"/>
</dbReference>
<dbReference type="PANTHER" id="PTHR10572">
    <property type="entry name" value="3-HYDROXY-3-METHYLGLUTARYL-COENZYME A REDUCTASE"/>
    <property type="match status" value="1"/>
</dbReference>
<dbReference type="PANTHER" id="PTHR10572:SF24">
    <property type="entry name" value="3-HYDROXY-3-METHYLGLUTARYL-COENZYME A REDUCTASE"/>
    <property type="match status" value="1"/>
</dbReference>
<dbReference type="Pfam" id="PF00368">
    <property type="entry name" value="HMG-CoA_red"/>
    <property type="match status" value="1"/>
</dbReference>
<dbReference type="Pfam" id="PF12349">
    <property type="entry name" value="Sterol-sensing"/>
    <property type="match status" value="1"/>
</dbReference>
<dbReference type="PRINTS" id="PR00071">
    <property type="entry name" value="HMGCOARDTASE"/>
</dbReference>
<dbReference type="SUPFAM" id="SSF82866">
    <property type="entry name" value="Multidrug efflux transporter AcrB transmembrane domain"/>
    <property type="match status" value="1"/>
</dbReference>
<dbReference type="SUPFAM" id="SSF55035">
    <property type="entry name" value="NAD-binding domain of HMG-CoA reductase"/>
    <property type="match status" value="1"/>
</dbReference>
<dbReference type="SUPFAM" id="SSF56542">
    <property type="entry name" value="Substrate-binding domain of HMG-CoA reductase"/>
    <property type="match status" value="1"/>
</dbReference>
<dbReference type="PROSITE" id="PS00066">
    <property type="entry name" value="HMG_COA_REDUCTASE_1"/>
    <property type="match status" value="1"/>
</dbReference>
<dbReference type="PROSITE" id="PS00318">
    <property type="entry name" value="HMG_COA_REDUCTASE_2"/>
    <property type="match status" value="1"/>
</dbReference>
<dbReference type="PROSITE" id="PS01192">
    <property type="entry name" value="HMG_COA_REDUCTASE_3"/>
    <property type="match status" value="1"/>
</dbReference>
<dbReference type="PROSITE" id="PS50065">
    <property type="entry name" value="HMG_COA_REDUCTASE_4"/>
    <property type="match status" value="1"/>
</dbReference>
<dbReference type="PROSITE" id="PS50156">
    <property type="entry name" value="SSD"/>
    <property type="match status" value="1"/>
</dbReference>
<reference key="1">
    <citation type="journal article" date="1988" name="J. Biol. Chem.">
        <title>3-hydroxy-3-methylglutaryl-coenzyme A reductase of the sea urchin embryo. Deduced structure and regulatory properties.</title>
        <authorList>
            <person name="Woodward H.D."/>
            <person name="Allen J.M.C."/>
            <person name="Lennarz W.J."/>
        </authorList>
    </citation>
    <scope>NUCLEOTIDE SEQUENCE [MRNA]</scope>
</reference>
<reference key="2">
    <citation type="journal article" date="1988" name="J. Biol. Chem.">
        <title>3-hydroxy-3-methylglutaryl coenzyme A reductase in the sea urchin embryo is developmentally regulated.</title>
        <authorList>
            <person name="Woodward H.D."/>
            <person name="Allen J.M.C."/>
            <person name="Lennarz W.J."/>
        </authorList>
    </citation>
    <scope>NUCLEOTIDE SEQUENCE [GENOMIC DNA] OF 689-735</scope>
</reference>
<accession>P16393</accession>